<accession>P67335</accession>
<accession>Q8XEM1</accession>
<sequence>MTIWVDADACPNVIKEILYRAAERMQLPLILVANQALRVPPSRFIRTLRVAAGFDVADNEIVRQCEAGDLVITADIPLAAEVLEKGAAALNPRGERYSDATIRERLTMRDFMDTLRASGVQTGGPNTLSPRDRQHFAAELDKWWLESQRKK</sequence>
<comment type="similarity">
    <text evidence="1">Belongs to the UPF0178 family.</text>
</comment>
<gene>
    <name evidence="1" type="primary">yaiI</name>
    <name type="ordered locus">STY0420</name>
    <name type="ordered locus">t2477</name>
</gene>
<name>YAII_SALTI</name>
<evidence type="ECO:0000255" key="1">
    <source>
        <dbReference type="HAMAP-Rule" id="MF_00489"/>
    </source>
</evidence>
<protein>
    <recommendedName>
        <fullName evidence="1">UPF0178 protein YaiI</fullName>
    </recommendedName>
</protein>
<organism>
    <name type="scientific">Salmonella typhi</name>
    <dbReference type="NCBI Taxonomy" id="90370"/>
    <lineage>
        <taxon>Bacteria</taxon>
        <taxon>Pseudomonadati</taxon>
        <taxon>Pseudomonadota</taxon>
        <taxon>Gammaproteobacteria</taxon>
        <taxon>Enterobacterales</taxon>
        <taxon>Enterobacteriaceae</taxon>
        <taxon>Salmonella</taxon>
    </lineage>
</organism>
<reference key="1">
    <citation type="journal article" date="2001" name="Nature">
        <title>Complete genome sequence of a multiple drug resistant Salmonella enterica serovar Typhi CT18.</title>
        <authorList>
            <person name="Parkhill J."/>
            <person name="Dougan G."/>
            <person name="James K.D."/>
            <person name="Thomson N.R."/>
            <person name="Pickard D."/>
            <person name="Wain J."/>
            <person name="Churcher C.M."/>
            <person name="Mungall K.L."/>
            <person name="Bentley S.D."/>
            <person name="Holden M.T.G."/>
            <person name="Sebaihia M."/>
            <person name="Baker S."/>
            <person name="Basham D."/>
            <person name="Brooks K."/>
            <person name="Chillingworth T."/>
            <person name="Connerton P."/>
            <person name="Cronin A."/>
            <person name="Davis P."/>
            <person name="Davies R.M."/>
            <person name="Dowd L."/>
            <person name="White N."/>
            <person name="Farrar J."/>
            <person name="Feltwell T."/>
            <person name="Hamlin N."/>
            <person name="Haque A."/>
            <person name="Hien T.T."/>
            <person name="Holroyd S."/>
            <person name="Jagels K."/>
            <person name="Krogh A."/>
            <person name="Larsen T.S."/>
            <person name="Leather S."/>
            <person name="Moule S."/>
            <person name="O'Gaora P."/>
            <person name="Parry C."/>
            <person name="Quail M.A."/>
            <person name="Rutherford K.M."/>
            <person name="Simmonds M."/>
            <person name="Skelton J."/>
            <person name="Stevens K."/>
            <person name="Whitehead S."/>
            <person name="Barrell B.G."/>
        </authorList>
    </citation>
    <scope>NUCLEOTIDE SEQUENCE [LARGE SCALE GENOMIC DNA]</scope>
    <source>
        <strain>CT18</strain>
    </source>
</reference>
<reference key="2">
    <citation type="journal article" date="2003" name="J. Bacteriol.">
        <title>Comparative genomics of Salmonella enterica serovar Typhi strains Ty2 and CT18.</title>
        <authorList>
            <person name="Deng W."/>
            <person name="Liou S.-R."/>
            <person name="Plunkett G. III"/>
            <person name="Mayhew G.F."/>
            <person name="Rose D.J."/>
            <person name="Burland V."/>
            <person name="Kodoyianni V."/>
            <person name="Schwartz D.C."/>
            <person name="Blattner F.R."/>
        </authorList>
    </citation>
    <scope>NUCLEOTIDE SEQUENCE [LARGE SCALE GENOMIC DNA]</scope>
    <source>
        <strain>ATCC 700931 / Ty2</strain>
    </source>
</reference>
<feature type="chain" id="PRO_0000176003" description="UPF0178 protein YaiI">
    <location>
        <begin position="1"/>
        <end position="151"/>
    </location>
</feature>
<proteinExistence type="inferred from homology"/>
<dbReference type="EMBL" id="AL513382">
    <property type="protein sequence ID" value="CAD08842.1"/>
    <property type="molecule type" value="Genomic_DNA"/>
</dbReference>
<dbReference type="EMBL" id="AE014613">
    <property type="protein sequence ID" value="AAO70065.1"/>
    <property type="molecule type" value="Genomic_DNA"/>
</dbReference>
<dbReference type="RefSeq" id="NP_454982.1">
    <property type="nucleotide sequence ID" value="NC_003198.1"/>
</dbReference>
<dbReference type="RefSeq" id="WP_000158137.1">
    <property type="nucleotide sequence ID" value="NZ_WSUR01000017.1"/>
</dbReference>
<dbReference type="STRING" id="220341.gene:17584447"/>
<dbReference type="KEGG" id="stt:t2477"/>
<dbReference type="KEGG" id="sty:STY0420"/>
<dbReference type="PATRIC" id="fig|220341.7.peg.418"/>
<dbReference type="eggNOG" id="COG1671">
    <property type="taxonomic scope" value="Bacteria"/>
</dbReference>
<dbReference type="HOGENOM" id="CLU_106619_1_0_6"/>
<dbReference type="OMA" id="CPVKDEI"/>
<dbReference type="OrthoDB" id="9798918at2"/>
<dbReference type="Proteomes" id="UP000000541">
    <property type="component" value="Chromosome"/>
</dbReference>
<dbReference type="Proteomes" id="UP000002670">
    <property type="component" value="Chromosome"/>
</dbReference>
<dbReference type="CDD" id="cd18720">
    <property type="entry name" value="PIN_YqxD-like"/>
    <property type="match status" value="1"/>
</dbReference>
<dbReference type="HAMAP" id="MF_00489">
    <property type="entry name" value="UPF0178"/>
    <property type="match status" value="1"/>
</dbReference>
<dbReference type="InterPro" id="IPR003791">
    <property type="entry name" value="UPF0178"/>
</dbReference>
<dbReference type="NCBIfam" id="NF001095">
    <property type="entry name" value="PRK00124.1"/>
    <property type="match status" value="1"/>
</dbReference>
<dbReference type="PANTHER" id="PTHR35146">
    <property type="entry name" value="UPF0178 PROTEIN YAII"/>
    <property type="match status" value="1"/>
</dbReference>
<dbReference type="PANTHER" id="PTHR35146:SF1">
    <property type="entry name" value="UPF0178 PROTEIN YAII"/>
    <property type="match status" value="1"/>
</dbReference>
<dbReference type="Pfam" id="PF02639">
    <property type="entry name" value="DUF188"/>
    <property type="match status" value="1"/>
</dbReference>